<reference key="1">
    <citation type="journal article" date="1996" name="Mol. Phylogenet. Evol.">
        <title>Phylogenetic relationships among the major lineages of the birds-of-paradise (paradisaeidae) using mitochondrial DNA gene sequences.</title>
        <authorList>
            <person name="Nunn G.B."/>
            <person name="Cracraft J."/>
        </authorList>
    </citation>
    <scope>NUCLEOTIDE SEQUENCE [GENOMIC DNA]</scope>
</reference>
<reference key="2">
    <citation type="journal article" date="1991" name="Proc. R. Soc. B">
        <title>Mitochondrial resolution of a deep branch in the genealogical tree for perching birds.</title>
        <authorList>
            <person name="Edwards S.V."/>
            <person name="Arctander P."/>
            <person name="Wilson A.C."/>
        </authorList>
    </citation>
    <scope>NUCLEOTIDE SEQUENCE [GENOMIC DNA] OF 34-341</scope>
</reference>
<reference key="3">
    <citation type="journal article" date="1996" name="Proc. R. Soc. B">
        <authorList>
            <person name="Edwards S.V."/>
            <person name="Arctander P."/>
        </authorList>
    </citation>
    <scope>ERRATUM OF PUBMED:1676522</scope>
</reference>
<keyword id="KW-0249">Electron transport</keyword>
<keyword id="KW-0349">Heme</keyword>
<keyword id="KW-0408">Iron</keyword>
<keyword id="KW-0472">Membrane</keyword>
<keyword id="KW-0479">Metal-binding</keyword>
<keyword id="KW-0496">Mitochondrion</keyword>
<keyword id="KW-0999">Mitochondrion inner membrane</keyword>
<keyword id="KW-0679">Respiratory chain</keyword>
<keyword id="KW-0812">Transmembrane</keyword>
<keyword id="KW-1133">Transmembrane helix</keyword>
<keyword id="KW-0813">Transport</keyword>
<keyword id="KW-0830">Ubiquinone</keyword>
<gene>
    <name type="primary">MT-CYB</name>
    <name type="synonym">COB</name>
    <name type="synonym">CYTB</name>
    <name type="synonym">MTCYB</name>
</gene>
<accession>P29636</accession>
<accession>Q34400</accession>
<proteinExistence type="inferred from homology"/>
<name>CYB_DREAL</name>
<organism>
    <name type="scientific">Drepanornis albertisi</name>
    <name type="common">Black-billed sicklebill</name>
    <name type="synonym">Epimachus albertisi</name>
    <dbReference type="NCBI Taxonomy" id="9151"/>
    <lineage>
        <taxon>Eukaryota</taxon>
        <taxon>Metazoa</taxon>
        <taxon>Chordata</taxon>
        <taxon>Craniata</taxon>
        <taxon>Vertebrata</taxon>
        <taxon>Euteleostomi</taxon>
        <taxon>Archelosauria</taxon>
        <taxon>Archosauria</taxon>
        <taxon>Dinosauria</taxon>
        <taxon>Saurischia</taxon>
        <taxon>Theropoda</taxon>
        <taxon>Coelurosauria</taxon>
        <taxon>Aves</taxon>
        <taxon>Neognathae</taxon>
        <taxon>Neoaves</taxon>
        <taxon>Telluraves</taxon>
        <taxon>Australaves</taxon>
        <taxon>Passeriformes</taxon>
        <taxon>Corvoidea</taxon>
        <taxon>Paradisaeidae</taxon>
        <taxon>Drepanornis</taxon>
    </lineage>
</organism>
<sequence length="380" mass="42465">MALNLRKNHPLLKTINDSLIDLPTPSNISIWWNFGSLLGICLMVQIITGLLLATHYTADTSLAFSSVAHMCRNVQFGWLIRNLHANGASLFFICIYLHIGRGFYYGSYLNKETWNIGVILLLTLMATAFVGYVLPWGQMSFWGATVITNLFSAIPYIGQTLVEWAWGGFSVDNPTLTRFFALHFLLPFVITGLTLVHLTFLHETGSNNPLGIPSDCDKIPFHPYYSIKDILGFALMLITLATLALFSPNLLGDPENFTPANPLATPPHIKPEWYFLFAYAILRSIPNKLGGVLALAASVLILFLIPLLHTSKQRSMTFRPLSQILFWILVTNLLILTWVGSQPVEHPFIIIGQLASFSYFMIILVLFPIAGVLENKLLNP</sequence>
<geneLocation type="mitochondrion"/>
<comment type="function">
    <text evidence="2">Component of the ubiquinol-cytochrome c reductase complex (complex III or cytochrome b-c1 complex) that is part of the mitochondrial respiratory chain. The b-c1 complex mediates electron transfer from ubiquinol to cytochrome c. Contributes to the generation of a proton gradient across the mitochondrial membrane that is then used for ATP synthesis.</text>
</comment>
<comment type="cofactor">
    <cofactor evidence="2">
        <name>heme b</name>
        <dbReference type="ChEBI" id="CHEBI:60344"/>
    </cofactor>
    <text evidence="2">Binds 2 heme b groups non-covalently.</text>
</comment>
<comment type="subunit">
    <text evidence="2">The cytochrome bc1 complex contains 11 subunits: 3 respiratory subunits (MT-CYB, CYC1 and UQCRFS1), 2 core proteins (UQCRC1 and UQCRC2) and 6 low-molecular weight proteins (UQCRH/QCR6, UQCRB/QCR7, UQCRQ/QCR8, UQCR10/QCR9, UQCR11/QCR10 and a cleavage product of UQCRFS1). This cytochrome bc1 complex then forms a dimer.</text>
</comment>
<comment type="subcellular location">
    <subcellularLocation>
        <location evidence="2">Mitochondrion inner membrane</location>
        <topology evidence="2">Multi-pass membrane protein</topology>
    </subcellularLocation>
</comment>
<comment type="miscellaneous">
    <text evidence="1">Heme 1 (or BL or b562) is low-potential and absorbs at about 562 nm, and heme 2 (or BH or b566) is high-potential and absorbs at about 566 nm.</text>
</comment>
<comment type="similarity">
    <text evidence="3 4">Belongs to the cytochrome b family.</text>
</comment>
<comment type="caution">
    <text evidence="2">The full-length protein contains only eight transmembrane helices, not nine as predicted by bioinformatics tools.</text>
</comment>
<dbReference type="EMBL" id="U15205">
    <property type="protein sequence ID" value="AAB38151.1"/>
    <property type="molecule type" value="Genomic_DNA"/>
</dbReference>
<dbReference type="EMBL" id="X60941">
    <property type="protein sequence ID" value="CAA43276.1"/>
    <property type="molecule type" value="Genomic_DNA"/>
</dbReference>
<dbReference type="PIR" id="S22924">
    <property type="entry name" value="S22924"/>
</dbReference>
<dbReference type="SMR" id="P29636"/>
<dbReference type="GO" id="GO:0005743">
    <property type="term" value="C:mitochondrial inner membrane"/>
    <property type="evidence" value="ECO:0007669"/>
    <property type="project" value="UniProtKB-SubCell"/>
</dbReference>
<dbReference type="GO" id="GO:0045275">
    <property type="term" value="C:respiratory chain complex III"/>
    <property type="evidence" value="ECO:0007669"/>
    <property type="project" value="InterPro"/>
</dbReference>
<dbReference type="GO" id="GO:0046872">
    <property type="term" value="F:metal ion binding"/>
    <property type="evidence" value="ECO:0007669"/>
    <property type="project" value="UniProtKB-KW"/>
</dbReference>
<dbReference type="GO" id="GO:0008121">
    <property type="term" value="F:ubiquinol-cytochrome-c reductase activity"/>
    <property type="evidence" value="ECO:0007669"/>
    <property type="project" value="InterPro"/>
</dbReference>
<dbReference type="GO" id="GO:0006122">
    <property type="term" value="P:mitochondrial electron transport, ubiquinol to cytochrome c"/>
    <property type="evidence" value="ECO:0007669"/>
    <property type="project" value="TreeGrafter"/>
</dbReference>
<dbReference type="CDD" id="cd00290">
    <property type="entry name" value="cytochrome_b_C"/>
    <property type="match status" value="1"/>
</dbReference>
<dbReference type="CDD" id="cd00284">
    <property type="entry name" value="Cytochrome_b_N"/>
    <property type="match status" value="1"/>
</dbReference>
<dbReference type="FunFam" id="1.20.810.10:FF:000002">
    <property type="entry name" value="Cytochrome b"/>
    <property type="match status" value="1"/>
</dbReference>
<dbReference type="Gene3D" id="1.20.810.10">
    <property type="entry name" value="Cytochrome Bc1 Complex, Chain C"/>
    <property type="match status" value="1"/>
</dbReference>
<dbReference type="InterPro" id="IPR005798">
    <property type="entry name" value="Cyt_b/b6_C"/>
</dbReference>
<dbReference type="InterPro" id="IPR036150">
    <property type="entry name" value="Cyt_b/b6_C_sf"/>
</dbReference>
<dbReference type="InterPro" id="IPR005797">
    <property type="entry name" value="Cyt_b/b6_N"/>
</dbReference>
<dbReference type="InterPro" id="IPR027387">
    <property type="entry name" value="Cytb/b6-like_sf"/>
</dbReference>
<dbReference type="InterPro" id="IPR030689">
    <property type="entry name" value="Cytochrome_b"/>
</dbReference>
<dbReference type="InterPro" id="IPR048260">
    <property type="entry name" value="Cytochrome_b_C_euk/bac"/>
</dbReference>
<dbReference type="InterPro" id="IPR048259">
    <property type="entry name" value="Cytochrome_b_N_euk/bac"/>
</dbReference>
<dbReference type="InterPro" id="IPR016174">
    <property type="entry name" value="Di-haem_cyt_TM"/>
</dbReference>
<dbReference type="PANTHER" id="PTHR19271">
    <property type="entry name" value="CYTOCHROME B"/>
    <property type="match status" value="1"/>
</dbReference>
<dbReference type="PANTHER" id="PTHR19271:SF16">
    <property type="entry name" value="CYTOCHROME B"/>
    <property type="match status" value="1"/>
</dbReference>
<dbReference type="Pfam" id="PF00032">
    <property type="entry name" value="Cytochrom_B_C"/>
    <property type="match status" value="1"/>
</dbReference>
<dbReference type="Pfam" id="PF00033">
    <property type="entry name" value="Cytochrome_B"/>
    <property type="match status" value="1"/>
</dbReference>
<dbReference type="PIRSF" id="PIRSF038885">
    <property type="entry name" value="COB"/>
    <property type="match status" value="1"/>
</dbReference>
<dbReference type="SUPFAM" id="SSF81648">
    <property type="entry name" value="a domain/subunit of cytochrome bc1 complex (Ubiquinol-cytochrome c reductase)"/>
    <property type="match status" value="1"/>
</dbReference>
<dbReference type="SUPFAM" id="SSF81342">
    <property type="entry name" value="Transmembrane di-heme cytochromes"/>
    <property type="match status" value="1"/>
</dbReference>
<dbReference type="PROSITE" id="PS51003">
    <property type="entry name" value="CYTB_CTER"/>
    <property type="match status" value="1"/>
</dbReference>
<dbReference type="PROSITE" id="PS51002">
    <property type="entry name" value="CYTB_NTER"/>
    <property type="match status" value="1"/>
</dbReference>
<feature type="chain" id="PRO_0000060934" description="Cytochrome b">
    <location>
        <begin position="1"/>
        <end position="380"/>
    </location>
</feature>
<feature type="transmembrane region" description="Helical" evidence="2">
    <location>
        <begin position="34"/>
        <end position="54"/>
    </location>
</feature>
<feature type="transmembrane region" description="Helical" evidence="2">
    <location>
        <begin position="78"/>
        <end position="99"/>
    </location>
</feature>
<feature type="transmembrane region" description="Helical" evidence="2">
    <location>
        <begin position="114"/>
        <end position="134"/>
    </location>
</feature>
<feature type="transmembrane region" description="Helical" evidence="2">
    <location>
        <begin position="179"/>
        <end position="199"/>
    </location>
</feature>
<feature type="transmembrane region" description="Helical" evidence="2">
    <location>
        <begin position="227"/>
        <end position="247"/>
    </location>
</feature>
<feature type="transmembrane region" description="Helical" evidence="2">
    <location>
        <begin position="289"/>
        <end position="309"/>
    </location>
</feature>
<feature type="transmembrane region" description="Helical" evidence="2">
    <location>
        <begin position="321"/>
        <end position="341"/>
    </location>
</feature>
<feature type="transmembrane region" description="Helical" evidence="2">
    <location>
        <begin position="348"/>
        <end position="368"/>
    </location>
</feature>
<feature type="binding site" description="axial binding residue" evidence="2">
    <location>
        <position position="84"/>
    </location>
    <ligand>
        <name>heme b</name>
        <dbReference type="ChEBI" id="CHEBI:60344"/>
        <label>b562</label>
    </ligand>
    <ligandPart>
        <name>Fe</name>
        <dbReference type="ChEBI" id="CHEBI:18248"/>
    </ligandPart>
</feature>
<feature type="binding site" description="axial binding residue" evidence="2">
    <location>
        <position position="98"/>
    </location>
    <ligand>
        <name>heme b</name>
        <dbReference type="ChEBI" id="CHEBI:60344"/>
        <label>b566</label>
    </ligand>
    <ligandPart>
        <name>Fe</name>
        <dbReference type="ChEBI" id="CHEBI:18248"/>
    </ligandPart>
</feature>
<feature type="binding site" description="axial binding residue" evidence="2">
    <location>
        <position position="183"/>
    </location>
    <ligand>
        <name>heme b</name>
        <dbReference type="ChEBI" id="CHEBI:60344"/>
        <label>b562</label>
    </ligand>
    <ligandPart>
        <name>Fe</name>
        <dbReference type="ChEBI" id="CHEBI:18248"/>
    </ligandPart>
</feature>
<feature type="binding site" description="axial binding residue" evidence="2">
    <location>
        <position position="197"/>
    </location>
    <ligand>
        <name>heme b</name>
        <dbReference type="ChEBI" id="CHEBI:60344"/>
        <label>b566</label>
    </ligand>
    <ligandPart>
        <name>Fe</name>
        <dbReference type="ChEBI" id="CHEBI:18248"/>
    </ligandPart>
</feature>
<feature type="binding site" evidence="2">
    <location>
        <position position="202"/>
    </location>
    <ligand>
        <name>a ubiquinone</name>
        <dbReference type="ChEBI" id="CHEBI:16389"/>
    </ligand>
</feature>
<feature type="sequence conflict" description="In Ref. 2; CAA43276." evidence="5" ref="2">
    <original>L</original>
    <variation>V</variation>
    <location>
        <position position="37"/>
    </location>
</feature>
<protein>
    <recommendedName>
        <fullName>Cytochrome b</fullName>
    </recommendedName>
    <alternativeName>
        <fullName>Complex III subunit 3</fullName>
    </alternativeName>
    <alternativeName>
        <fullName>Complex III subunit III</fullName>
    </alternativeName>
    <alternativeName>
        <fullName>Cytochrome b-c1 complex subunit 3</fullName>
    </alternativeName>
    <alternativeName>
        <fullName>Ubiquinol-cytochrome-c reductase complex cytochrome b subunit</fullName>
    </alternativeName>
</protein>
<evidence type="ECO:0000250" key="1"/>
<evidence type="ECO:0000250" key="2">
    <source>
        <dbReference type="UniProtKB" id="P00157"/>
    </source>
</evidence>
<evidence type="ECO:0000255" key="3">
    <source>
        <dbReference type="PROSITE-ProRule" id="PRU00967"/>
    </source>
</evidence>
<evidence type="ECO:0000255" key="4">
    <source>
        <dbReference type="PROSITE-ProRule" id="PRU00968"/>
    </source>
</evidence>
<evidence type="ECO:0000305" key="5"/>